<evidence type="ECO:0000255" key="1">
    <source>
        <dbReference type="HAMAP-Rule" id="MF_00041"/>
    </source>
</evidence>
<protein>
    <recommendedName>
        <fullName evidence="1">Cysteine--tRNA ligase</fullName>
        <ecNumber evidence="1">6.1.1.16</ecNumber>
    </recommendedName>
    <alternativeName>
        <fullName evidence="1">Cysteinyl-tRNA synthetase</fullName>
        <shortName evidence="1">CysRS</shortName>
    </alternativeName>
</protein>
<name>SYC_YERPB</name>
<accession>B2K7N2</accession>
<reference key="1">
    <citation type="submission" date="2008-04" db="EMBL/GenBank/DDBJ databases">
        <title>Complete sequence of Yersinia pseudotuberculosis PB1/+.</title>
        <authorList>
            <person name="Copeland A."/>
            <person name="Lucas S."/>
            <person name="Lapidus A."/>
            <person name="Glavina del Rio T."/>
            <person name="Dalin E."/>
            <person name="Tice H."/>
            <person name="Bruce D."/>
            <person name="Goodwin L."/>
            <person name="Pitluck S."/>
            <person name="Munk A.C."/>
            <person name="Brettin T."/>
            <person name="Detter J.C."/>
            <person name="Han C."/>
            <person name="Tapia R."/>
            <person name="Schmutz J."/>
            <person name="Larimer F."/>
            <person name="Land M."/>
            <person name="Hauser L."/>
            <person name="Challacombe J.F."/>
            <person name="Green L."/>
            <person name="Lindler L.E."/>
            <person name="Nikolich M.P."/>
            <person name="Richardson P."/>
        </authorList>
    </citation>
    <scope>NUCLEOTIDE SEQUENCE [LARGE SCALE GENOMIC DNA]</scope>
    <source>
        <strain>PB1/+</strain>
    </source>
</reference>
<proteinExistence type="inferred from homology"/>
<comment type="catalytic activity">
    <reaction evidence="1">
        <text>tRNA(Cys) + L-cysteine + ATP = L-cysteinyl-tRNA(Cys) + AMP + diphosphate</text>
        <dbReference type="Rhea" id="RHEA:17773"/>
        <dbReference type="Rhea" id="RHEA-COMP:9661"/>
        <dbReference type="Rhea" id="RHEA-COMP:9679"/>
        <dbReference type="ChEBI" id="CHEBI:30616"/>
        <dbReference type="ChEBI" id="CHEBI:33019"/>
        <dbReference type="ChEBI" id="CHEBI:35235"/>
        <dbReference type="ChEBI" id="CHEBI:78442"/>
        <dbReference type="ChEBI" id="CHEBI:78517"/>
        <dbReference type="ChEBI" id="CHEBI:456215"/>
        <dbReference type="EC" id="6.1.1.16"/>
    </reaction>
</comment>
<comment type="cofactor">
    <cofactor evidence="1">
        <name>Zn(2+)</name>
        <dbReference type="ChEBI" id="CHEBI:29105"/>
    </cofactor>
    <text evidence="1">Binds 1 zinc ion per subunit.</text>
</comment>
<comment type="subunit">
    <text evidence="1">Monomer.</text>
</comment>
<comment type="subcellular location">
    <subcellularLocation>
        <location evidence="1">Cytoplasm</location>
    </subcellularLocation>
</comment>
<comment type="similarity">
    <text evidence="1">Belongs to the class-I aminoacyl-tRNA synthetase family.</text>
</comment>
<organism>
    <name type="scientific">Yersinia pseudotuberculosis serotype IB (strain PB1/+)</name>
    <dbReference type="NCBI Taxonomy" id="502801"/>
    <lineage>
        <taxon>Bacteria</taxon>
        <taxon>Pseudomonadati</taxon>
        <taxon>Pseudomonadota</taxon>
        <taxon>Gammaproteobacteria</taxon>
        <taxon>Enterobacterales</taxon>
        <taxon>Yersiniaceae</taxon>
        <taxon>Yersinia</taxon>
    </lineage>
</organism>
<gene>
    <name evidence="1" type="primary">cysS</name>
    <name type="ordered locus">YPTS_1083</name>
</gene>
<sequence>MLKIFNTLSRQKEEFKPIHAGKVGMYVCGITIYDLCHIGHGRTFVAFDVVARYLRYLGYSLTYVRNVTDVDDKIIKRAIENNETCEQLTTRMLAEMHKDFDALNLERPDLEPRATHHIAEIIEMTERLIARGHAYVASNGDVMFAVDSDPDYGVLSRQDLDQLQAGARVEVADVKRNPMDFVLWKMSKPGEPRWESPWGPGRPGWHIECSAMNGKQLGAHFDIHGGGSDLMFPHHENEIAQSTCAHDGPYVNYWMHSGMVMIDKEKMSKSLNNFFTIRDVLAYYDAETVRYFLMSGHYRSQLNYSEENLKQARASLERLYTALRGTDANATPAGGAEFEARFRTAMDDDFNTPEAYSVLFDIAREVNRLKNEDMAAANGLAAELRKLAQVLGLLEQDPELFLQGGAQADDDEVAKIEALIKQRNDARSSKNWALADAARDQLNDLGIVLEDGPQGTTWRRK</sequence>
<dbReference type="EC" id="6.1.1.16" evidence="1"/>
<dbReference type="EMBL" id="CP001048">
    <property type="protein sequence ID" value="ACC88062.1"/>
    <property type="molecule type" value="Genomic_DNA"/>
</dbReference>
<dbReference type="RefSeq" id="WP_011191897.1">
    <property type="nucleotide sequence ID" value="NZ_CP009780.1"/>
</dbReference>
<dbReference type="SMR" id="B2K7N2"/>
<dbReference type="KEGG" id="ypb:YPTS_1083"/>
<dbReference type="PATRIC" id="fig|502801.10.peg.425"/>
<dbReference type="GO" id="GO:0005829">
    <property type="term" value="C:cytosol"/>
    <property type="evidence" value="ECO:0007669"/>
    <property type="project" value="TreeGrafter"/>
</dbReference>
<dbReference type="GO" id="GO:0005524">
    <property type="term" value="F:ATP binding"/>
    <property type="evidence" value="ECO:0007669"/>
    <property type="project" value="UniProtKB-UniRule"/>
</dbReference>
<dbReference type="GO" id="GO:0004817">
    <property type="term" value="F:cysteine-tRNA ligase activity"/>
    <property type="evidence" value="ECO:0007669"/>
    <property type="project" value="UniProtKB-UniRule"/>
</dbReference>
<dbReference type="GO" id="GO:0008270">
    <property type="term" value="F:zinc ion binding"/>
    <property type="evidence" value="ECO:0007669"/>
    <property type="project" value="UniProtKB-UniRule"/>
</dbReference>
<dbReference type="GO" id="GO:0006423">
    <property type="term" value="P:cysteinyl-tRNA aminoacylation"/>
    <property type="evidence" value="ECO:0007669"/>
    <property type="project" value="UniProtKB-UniRule"/>
</dbReference>
<dbReference type="CDD" id="cd07963">
    <property type="entry name" value="Anticodon_Ia_Cys"/>
    <property type="match status" value="1"/>
</dbReference>
<dbReference type="CDD" id="cd00672">
    <property type="entry name" value="CysRS_core"/>
    <property type="match status" value="1"/>
</dbReference>
<dbReference type="FunFam" id="1.20.120.1910:FF:000001">
    <property type="entry name" value="Cysteine--tRNA ligase"/>
    <property type="match status" value="1"/>
</dbReference>
<dbReference type="FunFam" id="3.40.50.620:FF:000009">
    <property type="entry name" value="Cysteine--tRNA ligase"/>
    <property type="match status" value="1"/>
</dbReference>
<dbReference type="Gene3D" id="1.20.120.1910">
    <property type="entry name" value="Cysteine-tRNA ligase, C-terminal anti-codon recognition domain"/>
    <property type="match status" value="1"/>
</dbReference>
<dbReference type="Gene3D" id="3.40.50.620">
    <property type="entry name" value="HUPs"/>
    <property type="match status" value="1"/>
</dbReference>
<dbReference type="HAMAP" id="MF_00041">
    <property type="entry name" value="Cys_tRNA_synth"/>
    <property type="match status" value="1"/>
</dbReference>
<dbReference type="InterPro" id="IPR015803">
    <property type="entry name" value="Cys-tRNA-ligase"/>
</dbReference>
<dbReference type="InterPro" id="IPR015273">
    <property type="entry name" value="Cys-tRNA-synt_Ia_DALR"/>
</dbReference>
<dbReference type="InterPro" id="IPR024909">
    <property type="entry name" value="Cys-tRNA/MSH_ligase"/>
</dbReference>
<dbReference type="InterPro" id="IPR056411">
    <property type="entry name" value="CysS_C"/>
</dbReference>
<dbReference type="InterPro" id="IPR014729">
    <property type="entry name" value="Rossmann-like_a/b/a_fold"/>
</dbReference>
<dbReference type="InterPro" id="IPR032678">
    <property type="entry name" value="tRNA-synt_1_cat_dom"/>
</dbReference>
<dbReference type="InterPro" id="IPR009080">
    <property type="entry name" value="tRNAsynth_Ia_anticodon-bd"/>
</dbReference>
<dbReference type="NCBIfam" id="TIGR00435">
    <property type="entry name" value="cysS"/>
    <property type="match status" value="1"/>
</dbReference>
<dbReference type="PANTHER" id="PTHR10890:SF3">
    <property type="entry name" value="CYSTEINE--TRNA LIGASE, CYTOPLASMIC"/>
    <property type="match status" value="1"/>
</dbReference>
<dbReference type="PANTHER" id="PTHR10890">
    <property type="entry name" value="CYSTEINYL-TRNA SYNTHETASE"/>
    <property type="match status" value="1"/>
</dbReference>
<dbReference type="Pfam" id="PF23493">
    <property type="entry name" value="CysS_C"/>
    <property type="match status" value="1"/>
</dbReference>
<dbReference type="Pfam" id="PF09190">
    <property type="entry name" value="DALR_2"/>
    <property type="match status" value="1"/>
</dbReference>
<dbReference type="Pfam" id="PF01406">
    <property type="entry name" value="tRNA-synt_1e"/>
    <property type="match status" value="1"/>
</dbReference>
<dbReference type="PRINTS" id="PR00983">
    <property type="entry name" value="TRNASYNTHCYS"/>
</dbReference>
<dbReference type="SMART" id="SM00840">
    <property type="entry name" value="DALR_2"/>
    <property type="match status" value="1"/>
</dbReference>
<dbReference type="SUPFAM" id="SSF47323">
    <property type="entry name" value="Anticodon-binding domain of a subclass of class I aminoacyl-tRNA synthetases"/>
    <property type="match status" value="1"/>
</dbReference>
<dbReference type="SUPFAM" id="SSF52374">
    <property type="entry name" value="Nucleotidylyl transferase"/>
    <property type="match status" value="1"/>
</dbReference>
<feature type="chain" id="PRO_1000090887" description="Cysteine--tRNA ligase">
    <location>
        <begin position="1"/>
        <end position="461"/>
    </location>
</feature>
<feature type="short sequence motif" description="'HIGH' region">
    <location>
        <begin position="30"/>
        <end position="40"/>
    </location>
</feature>
<feature type="short sequence motif" description="'KMSKS' region">
    <location>
        <begin position="266"/>
        <end position="270"/>
    </location>
</feature>
<feature type="binding site" evidence="1">
    <location>
        <position position="28"/>
    </location>
    <ligand>
        <name>Zn(2+)</name>
        <dbReference type="ChEBI" id="CHEBI:29105"/>
    </ligand>
</feature>
<feature type="binding site" evidence="1">
    <location>
        <position position="209"/>
    </location>
    <ligand>
        <name>Zn(2+)</name>
        <dbReference type="ChEBI" id="CHEBI:29105"/>
    </ligand>
</feature>
<feature type="binding site" evidence="1">
    <location>
        <position position="234"/>
    </location>
    <ligand>
        <name>Zn(2+)</name>
        <dbReference type="ChEBI" id="CHEBI:29105"/>
    </ligand>
</feature>
<feature type="binding site" evidence="1">
    <location>
        <position position="238"/>
    </location>
    <ligand>
        <name>Zn(2+)</name>
        <dbReference type="ChEBI" id="CHEBI:29105"/>
    </ligand>
</feature>
<feature type="binding site" evidence="1">
    <location>
        <position position="269"/>
    </location>
    <ligand>
        <name>ATP</name>
        <dbReference type="ChEBI" id="CHEBI:30616"/>
    </ligand>
</feature>
<keyword id="KW-0030">Aminoacyl-tRNA synthetase</keyword>
<keyword id="KW-0067">ATP-binding</keyword>
<keyword id="KW-0963">Cytoplasm</keyword>
<keyword id="KW-0436">Ligase</keyword>
<keyword id="KW-0479">Metal-binding</keyword>
<keyword id="KW-0547">Nucleotide-binding</keyword>
<keyword id="KW-0648">Protein biosynthesis</keyword>
<keyword id="KW-0862">Zinc</keyword>